<accession>Q6FTI0</accession>
<sequence length="323" mass="36739">MPTDNADLGQEDIDVFDNGRESFDRLNKPVLDGIGIEGNDDDDDDYLTLYNMTPRERLMYTFRRSMYKALDHFNSLPKWQRLLIILFGALVIVLGILMLIFHNKILDKVLETSKDLNERSSTNFILLVLLFFVGFPPMIGYSFLSTSTGLIYGVSFHGWFVLALGSVTGSVASFYVFKNLLHSRAEKLVHMNKRFEAFASILQEDNSYLMLALLRLCPFPYSLTNGAIAGIYGISVKNFTIANIITTPKLLIYLFIGARIKNMAEDHSTSSRIFDLVSILITLIIFTLTAWLLYFKTKQRYAQLKNQAVAQNSSANREVDFEI</sequence>
<feature type="chain" id="PRO_0000343066" description="Golgi apparatus membrane protein TVP38">
    <location>
        <begin position="1"/>
        <end position="323"/>
    </location>
</feature>
<feature type="topological domain" description="Lumenal" evidence="2">
    <location>
        <begin position="1"/>
        <end position="81"/>
    </location>
</feature>
<feature type="transmembrane region" description="Helical" evidence="2">
    <location>
        <begin position="82"/>
        <end position="102"/>
    </location>
</feature>
<feature type="topological domain" description="Cytoplasmic" evidence="2">
    <location>
        <begin position="103"/>
        <end position="123"/>
    </location>
</feature>
<feature type="transmembrane region" description="Helical" evidence="2">
    <location>
        <begin position="124"/>
        <end position="144"/>
    </location>
</feature>
<feature type="topological domain" description="Lumenal" evidence="2">
    <location>
        <begin position="145"/>
        <end position="148"/>
    </location>
</feature>
<feature type="transmembrane region" description="Helical" evidence="2">
    <location>
        <begin position="149"/>
        <end position="169"/>
    </location>
</feature>
<feature type="topological domain" description="Cytoplasmic" evidence="2">
    <location>
        <begin position="170"/>
        <end position="237"/>
    </location>
</feature>
<feature type="transmembrane region" description="Helical" evidence="2">
    <location>
        <begin position="238"/>
        <end position="258"/>
    </location>
</feature>
<feature type="topological domain" description="Lumenal" evidence="2">
    <location>
        <begin position="259"/>
        <end position="272"/>
    </location>
</feature>
<feature type="transmembrane region" description="Helical" evidence="2">
    <location>
        <begin position="273"/>
        <end position="293"/>
    </location>
</feature>
<feature type="topological domain" description="Cytoplasmic" evidence="2">
    <location>
        <begin position="294"/>
        <end position="323"/>
    </location>
</feature>
<feature type="region of interest" description="VTT domain" evidence="1">
    <location>
        <begin position="149"/>
        <end position="260"/>
    </location>
</feature>
<gene>
    <name type="primary">TVP38</name>
    <name type="ordered locus">CAGL0G02343g</name>
</gene>
<name>TVP38_CANGA</name>
<keyword id="KW-0333">Golgi apparatus</keyword>
<keyword id="KW-0472">Membrane</keyword>
<keyword id="KW-1185">Reference proteome</keyword>
<keyword id="KW-0812">Transmembrane</keyword>
<keyword id="KW-1133">Transmembrane helix</keyword>
<evidence type="ECO:0000250" key="1">
    <source>
        <dbReference type="UniProtKB" id="P36164"/>
    </source>
</evidence>
<evidence type="ECO:0000255" key="2"/>
<evidence type="ECO:0000305" key="3"/>
<protein>
    <recommendedName>
        <fullName>Golgi apparatus membrane protein TVP38</fullName>
    </recommendedName>
</protein>
<reference key="1">
    <citation type="journal article" date="2004" name="Nature">
        <title>Genome evolution in yeasts.</title>
        <authorList>
            <person name="Dujon B."/>
            <person name="Sherman D."/>
            <person name="Fischer G."/>
            <person name="Durrens P."/>
            <person name="Casaregola S."/>
            <person name="Lafontaine I."/>
            <person name="de Montigny J."/>
            <person name="Marck C."/>
            <person name="Neuveglise C."/>
            <person name="Talla E."/>
            <person name="Goffard N."/>
            <person name="Frangeul L."/>
            <person name="Aigle M."/>
            <person name="Anthouard V."/>
            <person name="Babour A."/>
            <person name="Barbe V."/>
            <person name="Barnay S."/>
            <person name="Blanchin S."/>
            <person name="Beckerich J.-M."/>
            <person name="Beyne E."/>
            <person name="Bleykasten C."/>
            <person name="Boisrame A."/>
            <person name="Boyer J."/>
            <person name="Cattolico L."/>
            <person name="Confanioleri F."/>
            <person name="de Daruvar A."/>
            <person name="Despons L."/>
            <person name="Fabre E."/>
            <person name="Fairhead C."/>
            <person name="Ferry-Dumazet H."/>
            <person name="Groppi A."/>
            <person name="Hantraye F."/>
            <person name="Hennequin C."/>
            <person name="Jauniaux N."/>
            <person name="Joyet P."/>
            <person name="Kachouri R."/>
            <person name="Kerrest A."/>
            <person name="Koszul R."/>
            <person name="Lemaire M."/>
            <person name="Lesur I."/>
            <person name="Ma L."/>
            <person name="Muller H."/>
            <person name="Nicaud J.-M."/>
            <person name="Nikolski M."/>
            <person name="Oztas S."/>
            <person name="Ozier-Kalogeropoulos O."/>
            <person name="Pellenz S."/>
            <person name="Potier S."/>
            <person name="Richard G.-F."/>
            <person name="Straub M.-L."/>
            <person name="Suleau A."/>
            <person name="Swennen D."/>
            <person name="Tekaia F."/>
            <person name="Wesolowski-Louvel M."/>
            <person name="Westhof E."/>
            <person name="Wirth B."/>
            <person name="Zeniou-Meyer M."/>
            <person name="Zivanovic Y."/>
            <person name="Bolotin-Fukuhara M."/>
            <person name="Thierry A."/>
            <person name="Bouchier C."/>
            <person name="Caudron B."/>
            <person name="Scarpelli C."/>
            <person name="Gaillardin C."/>
            <person name="Weissenbach J."/>
            <person name="Wincker P."/>
            <person name="Souciet J.-L."/>
        </authorList>
    </citation>
    <scope>NUCLEOTIDE SEQUENCE [LARGE SCALE GENOMIC DNA]</scope>
    <source>
        <strain>ATCC 2001 / BCRC 20586 / JCM 3761 / NBRC 0622 / NRRL Y-65 / CBS 138</strain>
    </source>
</reference>
<dbReference type="EMBL" id="CR380953">
    <property type="protein sequence ID" value="CAG59391.1"/>
    <property type="molecule type" value="Genomic_DNA"/>
</dbReference>
<dbReference type="RefSeq" id="XP_446464.1">
    <property type="nucleotide sequence ID" value="XM_446464.1"/>
</dbReference>
<dbReference type="SMR" id="Q6FTI0"/>
<dbReference type="FunCoup" id="Q6FTI0">
    <property type="interactions" value="131"/>
</dbReference>
<dbReference type="STRING" id="284593.Q6FTI0"/>
<dbReference type="EnsemblFungi" id="CAGL0G02343g-T">
    <property type="protein sequence ID" value="CAGL0G02343g-T-p1"/>
    <property type="gene ID" value="CAGL0G02343g"/>
</dbReference>
<dbReference type="KEGG" id="cgr:2888032"/>
<dbReference type="CGD" id="CAL0137539">
    <property type="gene designation" value="CAGL0G02343g"/>
</dbReference>
<dbReference type="VEuPathDB" id="FungiDB:CAGL0G02343g"/>
<dbReference type="eggNOG" id="KOG3140">
    <property type="taxonomic scope" value="Eukaryota"/>
</dbReference>
<dbReference type="HOGENOM" id="CLU_041954_1_1_1"/>
<dbReference type="InParanoid" id="Q6FTI0"/>
<dbReference type="Proteomes" id="UP000002428">
    <property type="component" value="Chromosome G"/>
</dbReference>
<dbReference type="GO" id="GO:0000139">
    <property type="term" value="C:Golgi membrane"/>
    <property type="evidence" value="ECO:0007669"/>
    <property type="project" value="UniProtKB-SubCell"/>
</dbReference>
<dbReference type="GO" id="GO:0000022">
    <property type="term" value="P:mitotic spindle elongation"/>
    <property type="evidence" value="ECO:0007669"/>
    <property type="project" value="EnsemblFungi"/>
</dbReference>
<dbReference type="GO" id="GO:0016192">
    <property type="term" value="P:vesicle-mediated transport"/>
    <property type="evidence" value="ECO:0007669"/>
    <property type="project" value="EnsemblFungi"/>
</dbReference>
<dbReference type="InterPro" id="IPR051076">
    <property type="entry name" value="Golgi_membrane_TVP38/TMEM64"/>
</dbReference>
<dbReference type="InterPro" id="IPR032816">
    <property type="entry name" value="VTT_dom"/>
</dbReference>
<dbReference type="PANTHER" id="PTHR47549:SF1">
    <property type="entry name" value="GOLGI APPARATUS MEMBRANE PROTEIN TVP38"/>
    <property type="match status" value="1"/>
</dbReference>
<dbReference type="PANTHER" id="PTHR47549">
    <property type="entry name" value="GOLGI APPARATUS MEMBRANE PROTEIN TVP38-RELATED"/>
    <property type="match status" value="1"/>
</dbReference>
<dbReference type="Pfam" id="PF09335">
    <property type="entry name" value="VTT_dom"/>
    <property type="match status" value="1"/>
</dbReference>
<comment type="function">
    <text>Golgi membrane protein involved in vesicular trafficking and spindle migration.</text>
</comment>
<comment type="subcellular location">
    <subcellularLocation>
        <location>Golgi apparatus membrane</location>
        <topology>Multi-pass membrane protein</topology>
    </subcellularLocation>
</comment>
<comment type="domain">
    <text evidence="1">The VTT domain was previously called the SNARE-assoc domain. As there is no evidence that this domain associates with SNARE proteins, it was renamed as VMP1, TMEM41, and TVP38 (VTT) domain.</text>
</comment>
<comment type="similarity">
    <text evidence="3">Belongs to the TVP38/TMEM64 family.</text>
</comment>
<organism>
    <name type="scientific">Candida glabrata (strain ATCC 2001 / BCRC 20586 / JCM 3761 / NBRC 0622 / NRRL Y-65 / CBS 138)</name>
    <name type="common">Yeast</name>
    <name type="synonym">Nakaseomyces glabratus</name>
    <dbReference type="NCBI Taxonomy" id="284593"/>
    <lineage>
        <taxon>Eukaryota</taxon>
        <taxon>Fungi</taxon>
        <taxon>Dikarya</taxon>
        <taxon>Ascomycota</taxon>
        <taxon>Saccharomycotina</taxon>
        <taxon>Saccharomycetes</taxon>
        <taxon>Saccharomycetales</taxon>
        <taxon>Saccharomycetaceae</taxon>
        <taxon>Nakaseomyces</taxon>
    </lineage>
</organism>
<proteinExistence type="inferred from homology"/>